<protein>
    <recommendedName>
        <fullName>Putative sodium-coupled neutral amino acid transporter 11</fullName>
    </recommendedName>
    <alternativeName>
        <fullName>Solute carrier family 38 member 11</fullName>
    </alternativeName>
</protein>
<feature type="chain" id="PRO_0000326059" description="Putative sodium-coupled neutral amino acid transporter 11">
    <location>
        <begin position="1"/>
        <end position="406"/>
    </location>
</feature>
<feature type="topological domain" description="Cytoplasmic" evidence="1">
    <location>
        <begin position="1"/>
        <end position="7"/>
    </location>
</feature>
<feature type="transmembrane region" description="Helical" evidence="1">
    <location>
        <begin position="8"/>
        <end position="28"/>
    </location>
</feature>
<feature type="transmembrane region" description="Helical" evidence="1">
    <location>
        <begin position="48"/>
        <end position="68"/>
    </location>
</feature>
<feature type="transmembrane region" description="Helical" evidence="1">
    <location>
        <begin position="93"/>
        <end position="113"/>
    </location>
</feature>
<feature type="transmembrane region" description="Helical" evidence="1">
    <location>
        <begin position="121"/>
        <end position="141"/>
    </location>
</feature>
<feature type="transmembrane region" description="Helical" evidence="1">
    <location>
        <begin position="156"/>
        <end position="176"/>
    </location>
</feature>
<feature type="transmembrane region" description="Helical" evidence="1">
    <location>
        <begin position="202"/>
        <end position="222"/>
    </location>
</feature>
<feature type="transmembrane region" description="Helical" evidence="1">
    <location>
        <begin position="241"/>
        <end position="263"/>
    </location>
</feature>
<feature type="transmembrane region" description="Helical" evidence="1">
    <location>
        <begin position="279"/>
        <end position="299"/>
    </location>
</feature>
<feature type="transmembrane region" description="Helical" evidence="1">
    <location>
        <begin position="301"/>
        <end position="321"/>
    </location>
</feature>
<feature type="transmembrane region" description="Helical" evidence="1">
    <location>
        <begin position="340"/>
        <end position="360"/>
    </location>
</feature>
<feature type="glycosylation site" description="N-linked (GlcNAc...) asparagine" evidence="1">
    <location>
        <position position="44"/>
    </location>
</feature>
<feature type="glycosylation site" description="N-linked (GlcNAc...) asparagine" evidence="1">
    <location>
        <position position="275"/>
    </location>
</feature>
<feature type="splice variant" id="VSP_032529" description="In isoform 2." evidence="2">
    <location>
        <begin position="66"/>
        <end position="87"/>
    </location>
</feature>
<feature type="sequence variant" id="VAR_039981" description="In dbSNP:rs4564790.">
    <original>A</original>
    <variation>T</variation>
    <location>
        <position position="194"/>
    </location>
</feature>
<sequence>MKQAGFPLGILLLFWVSYVTDFSLVLLIKGGALSGTDTYQSLVNKTFGFPGYLLLSVLQFLYPFIAMISYNIIAGDTLSKVFQRIPGVDPENVFIGRHFIIGLSTVTFTLPLSLYRNIAKLGKVSLISTGLTTLILGIVMARAISLGPHIPKTEDAWVFAKPNAIQAVGVMSFAFICHHNSFLVYSSLEEPTVAKWSRLIHMSIVISVFICIFFATCGYLTFTGFTQGDLFENYCRNDDLVTFGRFCYGVTVILTYPMECFVTREVIANVFFGGNLSSVFHIVVTVMVITVATLVSLLIDCLGIVLELNGVLCATPLIFIIPSACYLKLSEEPRTHSDKIMSCVMLPIGAVVMVFGFVMAITNTQDCTHGQEMFYCFPDNFSLTNTSESHVQQTTQLSTLNISIFQ</sequence>
<comment type="function">
    <text evidence="3">Putative sodium-dependent amino acid/proton antiporter.</text>
</comment>
<comment type="interaction">
    <interactant intactId="EBI-12819821">
        <id>Q08AI6</id>
    </interactant>
    <interactant intactId="EBI-11988865">
        <id>A5PKU2</id>
        <label>TUSC5</label>
    </interactant>
    <organismsDiffer>false</organismsDiffer>
    <experiments>3</experiments>
</comment>
<comment type="subcellular location">
    <subcellularLocation>
        <location evidence="1">Membrane</location>
        <topology evidence="1">Multi-pass membrane protein</topology>
    </subcellularLocation>
</comment>
<comment type="alternative products">
    <event type="alternative splicing"/>
    <isoform>
        <id>Q08AI6-1</id>
        <name>1</name>
        <sequence type="displayed"/>
    </isoform>
    <isoform>
        <id>Q08AI6-2</id>
        <name>2</name>
        <sequence type="described" ref="VSP_032529"/>
    </isoform>
</comment>
<comment type="similarity">
    <text evidence="3">Belongs to the amino acid/polyamine transporter 2 family.</text>
</comment>
<evidence type="ECO:0000255" key="1"/>
<evidence type="ECO:0000303" key="2">
    <source>
    </source>
</evidence>
<evidence type="ECO:0000305" key="3"/>
<dbReference type="EMBL" id="AK097141">
    <property type="protein sequence ID" value="BAC04962.1"/>
    <property type="molecule type" value="mRNA"/>
</dbReference>
<dbReference type="EMBL" id="AK293998">
    <property type="protein sequence ID" value="BAG57360.1"/>
    <property type="molecule type" value="mRNA"/>
</dbReference>
<dbReference type="EMBL" id="AC019197">
    <property type="protein sequence ID" value="AAY14946.1"/>
    <property type="molecule type" value="Genomic_DNA"/>
</dbReference>
<dbReference type="EMBL" id="CH471058">
    <property type="protein sequence ID" value="EAX11337.1"/>
    <property type="molecule type" value="Genomic_DNA"/>
</dbReference>
<dbReference type="EMBL" id="BC125157">
    <property type="protein sequence ID" value="AAI25158.1"/>
    <property type="molecule type" value="mRNA"/>
</dbReference>
<dbReference type="CCDS" id="CCDS2224.1">
    <molecule id="Q08AI6-2"/>
</dbReference>
<dbReference type="CCDS" id="CCDS56142.1">
    <molecule id="Q08AI6-1"/>
</dbReference>
<dbReference type="RefSeq" id="NP_001186077.1">
    <molecule id="Q08AI6-1"/>
    <property type="nucleotide sequence ID" value="NM_001199148.2"/>
</dbReference>
<dbReference type="RefSeq" id="NP_001338467.1">
    <molecule id="Q08AI6-1"/>
    <property type="nucleotide sequence ID" value="NM_001351538.2"/>
</dbReference>
<dbReference type="RefSeq" id="NP_775783.1">
    <molecule id="Q08AI6-2"/>
    <property type="nucleotide sequence ID" value="NM_173512.3"/>
</dbReference>
<dbReference type="SMR" id="Q08AI6"/>
<dbReference type="BioGRID" id="127360">
    <property type="interactions" value="8"/>
</dbReference>
<dbReference type="FunCoup" id="Q08AI6">
    <property type="interactions" value="42"/>
</dbReference>
<dbReference type="IntAct" id="Q08AI6">
    <property type="interactions" value="1"/>
</dbReference>
<dbReference type="STRING" id="9606.ENSP00000386272"/>
<dbReference type="TCDB" id="2.A.18.6.18">
    <property type="family name" value="the amino acid/auxin permease (aaap) family"/>
</dbReference>
<dbReference type="GlyCosmos" id="Q08AI6">
    <property type="glycosylation" value="4 sites, 1 glycan"/>
</dbReference>
<dbReference type="GlyGen" id="Q08AI6">
    <property type="glycosylation" value="4 sites, 1 O-linked glycan (2 sites)"/>
</dbReference>
<dbReference type="iPTMnet" id="Q08AI6"/>
<dbReference type="PhosphoSitePlus" id="Q08AI6"/>
<dbReference type="BioMuta" id="SLC38A11"/>
<dbReference type="DMDM" id="121940010"/>
<dbReference type="PaxDb" id="9606-ENSP00000386272"/>
<dbReference type="PeptideAtlas" id="Q08AI6"/>
<dbReference type="Antibodypedia" id="47970">
    <property type="antibodies" value="7 antibodies from 6 providers"/>
</dbReference>
<dbReference type="DNASU" id="151258"/>
<dbReference type="Ensembl" id="ENST00000303735.8">
    <molecule id="Q08AI6-2"/>
    <property type="protein sequence ID" value="ENSP00000306178.4"/>
    <property type="gene ID" value="ENSG00000169507.10"/>
</dbReference>
<dbReference type="Ensembl" id="ENST00000409149.7">
    <molecule id="Q08AI6-1"/>
    <property type="protein sequence ID" value="ENSP00000386272.3"/>
    <property type="gene ID" value="ENSG00000169507.10"/>
</dbReference>
<dbReference type="Ensembl" id="ENST00000409662.5">
    <molecule id="Q08AI6-1"/>
    <property type="protein sequence ID" value="ENSP00000386774.1"/>
    <property type="gene ID" value="ENSG00000169507.10"/>
</dbReference>
<dbReference type="GeneID" id="151258"/>
<dbReference type="KEGG" id="hsa:151258"/>
<dbReference type="UCSC" id="uc002ucu.3">
    <molecule id="Q08AI6-1"/>
    <property type="organism name" value="human"/>
</dbReference>
<dbReference type="AGR" id="HGNC:26836"/>
<dbReference type="CTD" id="151258"/>
<dbReference type="DisGeNET" id="151258"/>
<dbReference type="GeneCards" id="SLC38A11"/>
<dbReference type="HGNC" id="HGNC:26836">
    <property type="gene designation" value="SLC38A11"/>
</dbReference>
<dbReference type="HPA" id="ENSG00000169507">
    <property type="expression patterns" value="Tissue enhanced (choroid plexus, epididymis)"/>
</dbReference>
<dbReference type="MIM" id="616526">
    <property type="type" value="gene"/>
</dbReference>
<dbReference type="neXtProt" id="NX_Q08AI6"/>
<dbReference type="OpenTargets" id="ENSG00000169507"/>
<dbReference type="PharmGKB" id="PA162403771"/>
<dbReference type="VEuPathDB" id="HostDB:ENSG00000169507"/>
<dbReference type="eggNOG" id="KOG1305">
    <property type="taxonomic scope" value="Eukaryota"/>
</dbReference>
<dbReference type="GeneTree" id="ENSGT00940000157782"/>
<dbReference type="HOGENOM" id="CLU_009020_4_2_1"/>
<dbReference type="InParanoid" id="Q08AI6"/>
<dbReference type="OMA" id="FLFFGSQ"/>
<dbReference type="OrthoDB" id="28208at2759"/>
<dbReference type="PAN-GO" id="Q08AI6">
    <property type="GO annotations" value="2 GO annotations based on evolutionary models"/>
</dbReference>
<dbReference type="PhylomeDB" id="Q08AI6"/>
<dbReference type="TreeFam" id="TF328787"/>
<dbReference type="PathwayCommons" id="Q08AI6"/>
<dbReference type="SignaLink" id="Q08AI6"/>
<dbReference type="BioGRID-ORCS" id="151258">
    <property type="hits" value="14 hits in 1131 CRISPR screens"/>
</dbReference>
<dbReference type="ChiTaRS" id="SLC38A11">
    <property type="organism name" value="human"/>
</dbReference>
<dbReference type="GenomeRNAi" id="151258"/>
<dbReference type="Pharos" id="Q08AI6">
    <property type="development level" value="Tdark"/>
</dbReference>
<dbReference type="PRO" id="PR:Q08AI6"/>
<dbReference type="Proteomes" id="UP000005640">
    <property type="component" value="Chromosome 2"/>
</dbReference>
<dbReference type="RNAct" id="Q08AI6">
    <property type="molecule type" value="protein"/>
</dbReference>
<dbReference type="Bgee" id="ENSG00000169507">
    <property type="expression patterns" value="Expressed in corpus epididymis and 124 other cell types or tissues"/>
</dbReference>
<dbReference type="ExpressionAtlas" id="Q08AI6">
    <property type="expression patterns" value="baseline and differential"/>
</dbReference>
<dbReference type="GO" id="GO:0016020">
    <property type="term" value="C:membrane"/>
    <property type="evidence" value="ECO:0000318"/>
    <property type="project" value="GO_Central"/>
</dbReference>
<dbReference type="GO" id="GO:0015179">
    <property type="term" value="F:L-amino acid transmembrane transporter activity"/>
    <property type="evidence" value="ECO:0000318"/>
    <property type="project" value="GO_Central"/>
</dbReference>
<dbReference type="GO" id="GO:0003333">
    <property type="term" value="P:amino acid transmembrane transport"/>
    <property type="evidence" value="ECO:0000318"/>
    <property type="project" value="GO_Central"/>
</dbReference>
<dbReference type="GO" id="GO:0006814">
    <property type="term" value="P:sodium ion transport"/>
    <property type="evidence" value="ECO:0007669"/>
    <property type="project" value="UniProtKB-KW"/>
</dbReference>
<dbReference type="InterPro" id="IPR013057">
    <property type="entry name" value="AA_transpt_TM"/>
</dbReference>
<dbReference type="PANTHER" id="PTHR22950">
    <property type="entry name" value="AMINO ACID TRANSPORTER"/>
    <property type="match status" value="1"/>
</dbReference>
<dbReference type="PANTHER" id="PTHR22950:SF458">
    <property type="entry name" value="SODIUM-COUPLED NEUTRAL AMINO ACID TRANSPORTER 11-RELATED"/>
    <property type="match status" value="1"/>
</dbReference>
<dbReference type="Pfam" id="PF01490">
    <property type="entry name" value="Aa_trans"/>
    <property type="match status" value="1"/>
</dbReference>
<accession>Q08AI6</accession>
<accession>B4DF99</accession>
<accession>Q8N887</accession>
<keyword id="KW-0025">Alternative splicing</keyword>
<keyword id="KW-0029">Amino-acid transport</keyword>
<keyword id="KW-0325">Glycoprotein</keyword>
<keyword id="KW-0406">Ion transport</keyword>
<keyword id="KW-0472">Membrane</keyword>
<keyword id="KW-1185">Reference proteome</keyword>
<keyword id="KW-0915">Sodium</keyword>
<keyword id="KW-0739">Sodium transport</keyword>
<keyword id="KW-0812">Transmembrane</keyword>
<keyword id="KW-1133">Transmembrane helix</keyword>
<keyword id="KW-0813">Transport</keyword>
<proteinExistence type="evidence at protein level"/>
<organism>
    <name type="scientific">Homo sapiens</name>
    <name type="common">Human</name>
    <dbReference type="NCBI Taxonomy" id="9606"/>
    <lineage>
        <taxon>Eukaryota</taxon>
        <taxon>Metazoa</taxon>
        <taxon>Chordata</taxon>
        <taxon>Craniata</taxon>
        <taxon>Vertebrata</taxon>
        <taxon>Euteleostomi</taxon>
        <taxon>Mammalia</taxon>
        <taxon>Eutheria</taxon>
        <taxon>Euarchontoglires</taxon>
        <taxon>Primates</taxon>
        <taxon>Haplorrhini</taxon>
        <taxon>Catarrhini</taxon>
        <taxon>Hominidae</taxon>
        <taxon>Homo</taxon>
    </lineage>
</organism>
<gene>
    <name type="primary">SLC38A11</name>
    <name type="synonym">AVT2</name>
</gene>
<name>S38AB_HUMAN</name>
<reference key="1">
    <citation type="journal article" date="2004" name="Nat. Genet.">
        <title>Complete sequencing and characterization of 21,243 full-length human cDNAs.</title>
        <authorList>
            <person name="Ota T."/>
            <person name="Suzuki Y."/>
            <person name="Nishikawa T."/>
            <person name="Otsuki T."/>
            <person name="Sugiyama T."/>
            <person name="Irie R."/>
            <person name="Wakamatsu A."/>
            <person name="Hayashi K."/>
            <person name="Sato H."/>
            <person name="Nagai K."/>
            <person name="Kimura K."/>
            <person name="Makita H."/>
            <person name="Sekine M."/>
            <person name="Obayashi M."/>
            <person name="Nishi T."/>
            <person name="Shibahara T."/>
            <person name="Tanaka T."/>
            <person name="Ishii S."/>
            <person name="Yamamoto J."/>
            <person name="Saito K."/>
            <person name="Kawai Y."/>
            <person name="Isono Y."/>
            <person name="Nakamura Y."/>
            <person name="Nagahari K."/>
            <person name="Murakami K."/>
            <person name="Yasuda T."/>
            <person name="Iwayanagi T."/>
            <person name="Wagatsuma M."/>
            <person name="Shiratori A."/>
            <person name="Sudo H."/>
            <person name="Hosoiri T."/>
            <person name="Kaku Y."/>
            <person name="Kodaira H."/>
            <person name="Kondo H."/>
            <person name="Sugawara M."/>
            <person name="Takahashi M."/>
            <person name="Kanda K."/>
            <person name="Yokoi T."/>
            <person name="Furuya T."/>
            <person name="Kikkawa E."/>
            <person name="Omura Y."/>
            <person name="Abe K."/>
            <person name="Kamihara K."/>
            <person name="Katsuta N."/>
            <person name="Sato K."/>
            <person name="Tanikawa M."/>
            <person name="Yamazaki M."/>
            <person name="Ninomiya K."/>
            <person name="Ishibashi T."/>
            <person name="Yamashita H."/>
            <person name="Murakawa K."/>
            <person name="Fujimori K."/>
            <person name="Tanai H."/>
            <person name="Kimata M."/>
            <person name="Watanabe M."/>
            <person name="Hiraoka S."/>
            <person name="Chiba Y."/>
            <person name="Ishida S."/>
            <person name="Ono Y."/>
            <person name="Takiguchi S."/>
            <person name="Watanabe S."/>
            <person name="Yosida M."/>
            <person name="Hotuta T."/>
            <person name="Kusano J."/>
            <person name="Kanehori K."/>
            <person name="Takahashi-Fujii A."/>
            <person name="Hara H."/>
            <person name="Tanase T.-O."/>
            <person name="Nomura Y."/>
            <person name="Togiya S."/>
            <person name="Komai F."/>
            <person name="Hara R."/>
            <person name="Takeuchi K."/>
            <person name="Arita M."/>
            <person name="Imose N."/>
            <person name="Musashino K."/>
            <person name="Yuuki H."/>
            <person name="Oshima A."/>
            <person name="Sasaki N."/>
            <person name="Aotsuka S."/>
            <person name="Yoshikawa Y."/>
            <person name="Matsunawa H."/>
            <person name="Ichihara T."/>
            <person name="Shiohata N."/>
            <person name="Sano S."/>
            <person name="Moriya S."/>
            <person name="Momiyama H."/>
            <person name="Satoh N."/>
            <person name="Takami S."/>
            <person name="Terashima Y."/>
            <person name="Suzuki O."/>
            <person name="Nakagawa S."/>
            <person name="Senoh A."/>
            <person name="Mizoguchi H."/>
            <person name="Goto Y."/>
            <person name="Shimizu F."/>
            <person name="Wakebe H."/>
            <person name="Hishigaki H."/>
            <person name="Watanabe T."/>
            <person name="Sugiyama A."/>
            <person name="Takemoto M."/>
            <person name="Kawakami B."/>
            <person name="Yamazaki M."/>
            <person name="Watanabe K."/>
            <person name="Kumagai A."/>
            <person name="Itakura S."/>
            <person name="Fukuzumi Y."/>
            <person name="Fujimori Y."/>
            <person name="Komiyama M."/>
            <person name="Tashiro H."/>
            <person name="Tanigami A."/>
            <person name="Fujiwara T."/>
            <person name="Ono T."/>
            <person name="Yamada K."/>
            <person name="Fujii Y."/>
            <person name="Ozaki K."/>
            <person name="Hirao M."/>
            <person name="Ohmori Y."/>
            <person name="Kawabata A."/>
            <person name="Hikiji T."/>
            <person name="Kobatake N."/>
            <person name="Inagaki H."/>
            <person name="Ikema Y."/>
            <person name="Okamoto S."/>
            <person name="Okitani R."/>
            <person name="Kawakami T."/>
            <person name="Noguchi S."/>
            <person name="Itoh T."/>
            <person name="Shigeta K."/>
            <person name="Senba T."/>
            <person name="Matsumura K."/>
            <person name="Nakajima Y."/>
            <person name="Mizuno T."/>
            <person name="Morinaga M."/>
            <person name="Sasaki M."/>
            <person name="Togashi T."/>
            <person name="Oyama M."/>
            <person name="Hata H."/>
            <person name="Watanabe M."/>
            <person name="Komatsu T."/>
            <person name="Mizushima-Sugano J."/>
            <person name="Satoh T."/>
            <person name="Shirai Y."/>
            <person name="Takahashi Y."/>
            <person name="Nakagawa K."/>
            <person name="Okumura K."/>
            <person name="Nagase T."/>
            <person name="Nomura N."/>
            <person name="Kikuchi H."/>
            <person name="Masuho Y."/>
            <person name="Yamashita R."/>
            <person name="Nakai K."/>
            <person name="Yada T."/>
            <person name="Nakamura Y."/>
            <person name="Ohara O."/>
            <person name="Isogai T."/>
            <person name="Sugano S."/>
        </authorList>
    </citation>
    <scope>NUCLEOTIDE SEQUENCE [LARGE SCALE MRNA] (ISOFORMS 1 AND 2)</scope>
    <source>
        <tissue>Cerebellum</tissue>
        <tissue>Spleen</tissue>
    </source>
</reference>
<reference key="2">
    <citation type="journal article" date="2005" name="Nature">
        <title>Generation and annotation of the DNA sequences of human chromosomes 2 and 4.</title>
        <authorList>
            <person name="Hillier L.W."/>
            <person name="Graves T.A."/>
            <person name="Fulton R.S."/>
            <person name="Fulton L.A."/>
            <person name="Pepin K.H."/>
            <person name="Minx P."/>
            <person name="Wagner-McPherson C."/>
            <person name="Layman D."/>
            <person name="Wylie K."/>
            <person name="Sekhon M."/>
            <person name="Becker M.C."/>
            <person name="Fewell G.A."/>
            <person name="Delehaunty K.D."/>
            <person name="Miner T.L."/>
            <person name="Nash W.E."/>
            <person name="Kremitzki C."/>
            <person name="Oddy L."/>
            <person name="Du H."/>
            <person name="Sun H."/>
            <person name="Bradshaw-Cordum H."/>
            <person name="Ali J."/>
            <person name="Carter J."/>
            <person name="Cordes M."/>
            <person name="Harris A."/>
            <person name="Isak A."/>
            <person name="van Brunt A."/>
            <person name="Nguyen C."/>
            <person name="Du F."/>
            <person name="Courtney L."/>
            <person name="Kalicki J."/>
            <person name="Ozersky P."/>
            <person name="Abbott S."/>
            <person name="Armstrong J."/>
            <person name="Belter E.A."/>
            <person name="Caruso L."/>
            <person name="Cedroni M."/>
            <person name="Cotton M."/>
            <person name="Davidson T."/>
            <person name="Desai A."/>
            <person name="Elliott G."/>
            <person name="Erb T."/>
            <person name="Fronick C."/>
            <person name="Gaige T."/>
            <person name="Haakenson W."/>
            <person name="Haglund K."/>
            <person name="Holmes A."/>
            <person name="Harkins R."/>
            <person name="Kim K."/>
            <person name="Kruchowski S.S."/>
            <person name="Strong C.M."/>
            <person name="Grewal N."/>
            <person name="Goyea E."/>
            <person name="Hou S."/>
            <person name="Levy A."/>
            <person name="Martinka S."/>
            <person name="Mead K."/>
            <person name="McLellan M.D."/>
            <person name="Meyer R."/>
            <person name="Randall-Maher J."/>
            <person name="Tomlinson C."/>
            <person name="Dauphin-Kohlberg S."/>
            <person name="Kozlowicz-Reilly A."/>
            <person name="Shah N."/>
            <person name="Swearengen-Shahid S."/>
            <person name="Snider J."/>
            <person name="Strong J.T."/>
            <person name="Thompson J."/>
            <person name="Yoakum M."/>
            <person name="Leonard S."/>
            <person name="Pearman C."/>
            <person name="Trani L."/>
            <person name="Radionenko M."/>
            <person name="Waligorski J.E."/>
            <person name="Wang C."/>
            <person name="Rock S.M."/>
            <person name="Tin-Wollam A.-M."/>
            <person name="Maupin R."/>
            <person name="Latreille P."/>
            <person name="Wendl M.C."/>
            <person name="Yang S.-P."/>
            <person name="Pohl C."/>
            <person name="Wallis J.W."/>
            <person name="Spieth J."/>
            <person name="Bieri T.A."/>
            <person name="Berkowicz N."/>
            <person name="Nelson J.O."/>
            <person name="Osborne J."/>
            <person name="Ding L."/>
            <person name="Meyer R."/>
            <person name="Sabo A."/>
            <person name="Shotland Y."/>
            <person name="Sinha P."/>
            <person name="Wohldmann P.E."/>
            <person name="Cook L.L."/>
            <person name="Hickenbotham M.T."/>
            <person name="Eldred J."/>
            <person name="Williams D."/>
            <person name="Jones T.A."/>
            <person name="She X."/>
            <person name="Ciccarelli F.D."/>
            <person name="Izaurralde E."/>
            <person name="Taylor J."/>
            <person name="Schmutz J."/>
            <person name="Myers R.M."/>
            <person name="Cox D.R."/>
            <person name="Huang X."/>
            <person name="McPherson J.D."/>
            <person name="Mardis E.R."/>
            <person name="Clifton S.W."/>
            <person name="Warren W.C."/>
            <person name="Chinwalla A.T."/>
            <person name="Eddy S.R."/>
            <person name="Marra M.A."/>
            <person name="Ovcharenko I."/>
            <person name="Furey T.S."/>
            <person name="Miller W."/>
            <person name="Eichler E.E."/>
            <person name="Bork P."/>
            <person name="Suyama M."/>
            <person name="Torrents D."/>
            <person name="Waterston R.H."/>
            <person name="Wilson R.K."/>
        </authorList>
    </citation>
    <scope>NUCLEOTIDE SEQUENCE [LARGE SCALE GENOMIC DNA]</scope>
</reference>
<reference key="3">
    <citation type="submission" date="2005-09" db="EMBL/GenBank/DDBJ databases">
        <authorList>
            <person name="Mural R.J."/>
            <person name="Istrail S."/>
            <person name="Sutton G.G."/>
            <person name="Florea L."/>
            <person name="Halpern A.L."/>
            <person name="Mobarry C.M."/>
            <person name="Lippert R."/>
            <person name="Walenz B."/>
            <person name="Shatkay H."/>
            <person name="Dew I."/>
            <person name="Miller J.R."/>
            <person name="Flanigan M.J."/>
            <person name="Edwards N.J."/>
            <person name="Bolanos R."/>
            <person name="Fasulo D."/>
            <person name="Halldorsson B.V."/>
            <person name="Hannenhalli S."/>
            <person name="Turner R."/>
            <person name="Yooseph S."/>
            <person name="Lu F."/>
            <person name="Nusskern D.R."/>
            <person name="Shue B.C."/>
            <person name="Zheng X.H."/>
            <person name="Zhong F."/>
            <person name="Delcher A.L."/>
            <person name="Huson D.H."/>
            <person name="Kravitz S.A."/>
            <person name="Mouchard L."/>
            <person name="Reinert K."/>
            <person name="Remington K.A."/>
            <person name="Clark A.G."/>
            <person name="Waterman M.S."/>
            <person name="Eichler E.E."/>
            <person name="Adams M.D."/>
            <person name="Hunkapiller M.W."/>
            <person name="Myers E.W."/>
            <person name="Venter J.C."/>
        </authorList>
    </citation>
    <scope>NUCLEOTIDE SEQUENCE [LARGE SCALE GENOMIC DNA]</scope>
</reference>
<reference key="4">
    <citation type="journal article" date="2004" name="Genome Res.">
        <title>The status, quality, and expansion of the NIH full-length cDNA project: the Mammalian Gene Collection (MGC).</title>
        <authorList>
            <consortium name="The MGC Project Team"/>
        </authorList>
    </citation>
    <scope>NUCLEOTIDE SEQUENCE [LARGE SCALE MRNA] (ISOFORM 1)</scope>
</reference>